<dbReference type="EMBL" id="AE014184">
    <property type="protein sequence ID" value="AAO44628.1"/>
    <property type="status" value="ALT_INIT"/>
    <property type="molecule type" value="Genomic_DNA"/>
</dbReference>
<dbReference type="SMR" id="Q83G08"/>
<dbReference type="STRING" id="203267.TWT_531"/>
<dbReference type="KEGG" id="twh:TWT_531"/>
<dbReference type="eggNOG" id="COG0257">
    <property type="taxonomic scope" value="Bacteria"/>
</dbReference>
<dbReference type="HOGENOM" id="CLU_135723_6_2_11"/>
<dbReference type="OrthoDB" id="9802520at2"/>
<dbReference type="Proteomes" id="UP000002200">
    <property type="component" value="Chromosome"/>
</dbReference>
<dbReference type="GO" id="GO:0005737">
    <property type="term" value="C:cytoplasm"/>
    <property type="evidence" value="ECO:0007669"/>
    <property type="project" value="UniProtKB-ARBA"/>
</dbReference>
<dbReference type="GO" id="GO:1990904">
    <property type="term" value="C:ribonucleoprotein complex"/>
    <property type="evidence" value="ECO:0007669"/>
    <property type="project" value="UniProtKB-KW"/>
</dbReference>
<dbReference type="GO" id="GO:0005840">
    <property type="term" value="C:ribosome"/>
    <property type="evidence" value="ECO:0007669"/>
    <property type="project" value="UniProtKB-KW"/>
</dbReference>
<dbReference type="GO" id="GO:0003735">
    <property type="term" value="F:structural constituent of ribosome"/>
    <property type="evidence" value="ECO:0007669"/>
    <property type="project" value="InterPro"/>
</dbReference>
<dbReference type="GO" id="GO:0006412">
    <property type="term" value="P:translation"/>
    <property type="evidence" value="ECO:0007669"/>
    <property type="project" value="UniProtKB-UniRule"/>
</dbReference>
<dbReference type="HAMAP" id="MF_00251">
    <property type="entry name" value="Ribosomal_bL36"/>
    <property type="match status" value="1"/>
</dbReference>
<dbReference type="InterPro" id="IPR000473">
    <property type="entry name" value="Ribosomal_bL36"/>
</dbReference>
<dbReference type="InterPro" id="IPR035977">
    <property type="entry name" value="Ribosomal_bL36_sp"/>
</dbReference>
<dbReference type="NCBIfam" id="TIGR01022">
    <property type="entry name" value="rpmJ_bact"/>
    <property type="match status" value="1"/>
</dbReference>
<dbReference type="PANTHER" id="PTHR42888">
    <property type="entry name" value="50S RIBOSOMAL PROTEIN L36, CHLOROPLASTIC"/>
    <property type="match status" value="1"/>
</dbReference>
<dbReference type="PANTHER" id="PTHR42888:SF1">
    <property type="entry name" value="LARGE RIBOSOMAL SUBUNIT PROTEIN BL36C"/>
    <property type="match status" value="1"/>
</dbReference>
<dbReference type="Pfam" id="PF00444">
    <property type="entry name" value="Ribosomal_L36"/>
    <property type="match status" value="1"/>
</dbReference>
<dbReference type="SUPFAM" id="SSF57840">
    <property type="entry name" value="Ribosomal protein L36"/>
    <property type="match status" value="1"/>
</dbReference>
<dbReference type="PROSITE" id="PS00828">
    <property type="entry name" value="RIBOSOMAL_L36"/>
    <property type="match status" value="1"/>
</dbReference>
<feature type="chain" id="PRO_0000126290" description="Large ribosomal subunit protein bL36">
    <location>
        <begin position="1"/>
        <end position="37"/>
    </location>
</feature>
<protein>
    <recommendedName>
        <fullName evidence="1">Large ribosomal subunit protein bL36</fullName>
    </recommendedName>
    <alternativeName>
        <fullName evidence="2">50S ribosomal protein L36</fullName>
    </alternativeName>
</protein>
<reference key="1">
    <citation type="journal article" date="2003" name="Genome Res.">
        <title>Tropheryma whipplei twist: a human pathogenic Actinobacteria with a reduced genome.</title>
        <authorList>
            <person name="Raoult D."/>
            <person name="Ogata H."/>
            <person name="Audic S."/>
            <person name="Robert C."/>
            <person name="Suhre K."/>
            <person name="Drancourt M."/>
            <person name="Claverie J.-M."/>
        </authorList>
    </citation>
    <scope>NUCLEOTIDE SEQUENCE [LARGE SCALE GENOMIC DNA]</scope>
    <source>
        <strain>Twist</strain>
    </source>
</reference>
<evidence type="ECO:0000255" key="1">
    <source>
        <dbReference type="HAMAP-Rule" id="MF_00251"/>
    </source>
</evidence>
<evidence type="ECO:0000305" key="2"/>
<comment type="similarity">
    <text evidence="1">Belongs to the bacterial ribosomal protein bL36 family.</text>
</comment>
<comment type="sequence caution" evidence="2">
    <conflict type="erroneous initiation">
        <sequence resource="EMBL-CDS" id="AAO44628"/>
    </conflict>
</comment>
<accession>Q83G08</accession>
<sequence>MKVKPSVKKICGVCKVIRRNGRVAVLCSNPRHKQRQG</sequence>
<gene>
    <name evidence="1" type="primary">rpmJ</name>
    <name type="ordered locus">TWT_531</name>
</gene>
<organism>
    <name type="scientific">Tropheryma whipplei (strain Twist)</name>
    <name type="common">Whipple's bacillus</name>
    <dbReference type="NCBI Taxonomy" id="203267"/>
    <lineage>
        <taxon>Bacteria</taxon>
        <taxon>Bacillati</taxon>
        <taxon>Actinomycetota</taxon>
        <taxon>Actinomycetes</taxon>
        <taxon>Micrococcales</taxon>
        <taxon>Tropherymataceae</taxon>
        <taxon>Tropheryma</taxon>
    </lineage>
</organism>
<proteinExistence type="inferred from homology"/>
<keyword id="KW-1185">Reference proteome</keyword>
<keyword id="KW-0687">Ribonucleoprotein</keyword>
<keyword id="KW-0689">Ribosomal protein</keyword>
<name>RL36_TROWT</name>